<feature type="chain" id="PRO_0000408250" description="Sensory neuron membrane protein 1">
    <location>
        <begin position="1"/>
        <end position="523"/>
    </location>
</feature>
<feature type="topological domain" description="Cytoplasmic" evidence="3">
    <location>
        <begin position="1"/>
        <end position="11"/>
    </location>
</feature>
<feature type="transmembrane region" description="Helical" evidence="3">
    <location>
        <begin position="12"/>
        <end position="32"/>
    </location>
</feature>
<feature type="topological domain" description="Extracellular" evidence="3">
    <location>
        <begin position="33"/>
        <end position="458"/>
    </location>
</feature>
<feature type="transmembrane region" description="Helical" evidence="3">
    <location>
        <begin position="459"/>
        <end position="479"/>
    </location>
</feature>
<feature type="topological domain" description="Cytoplasmic" evidence="3">
    <location>
        <begin position="480"/>
        <end position="523"/>
    </location>
</feature>
<feature type="glycosylation site" description="N-linked (GlcNAc...) asparagine" evidence="3">
    <location>
        <position position="67"/>
    </location>
</feature>
<feature type="glycosylation site" description="N-linked (GlcNAc...) asparagine" evidence="3">
    <location>
        <position position="229"/>
    </location>
</feature>
<feature type="glycosylation site" description="N-linked (GlcNAc...) asparagine" evidence="3">
    <location>
        <position position="440"/>
    </location>
</feature>
<feature type="disulfide bond" evidence="2">
    <location>
        <begin position="268"/>
        <end position="333"/>
    </location>
</feature>
<feature type="disulfide bond" evidence="2">
    <location>
        <begin position="297"/>
        <end position="352"/>
    </location>
</feature>
<feature type="disulfide bond" evidence="2">
    <location>
        <begin position="335"/>
        <end position="341"/>
    </location>
</feature>
<proteinExistence type="evidence at transcript level"/>
<name>SNMP1_HELVI</name>
<sequence length="523" mass="59108">MQLPKELKYAAIAGGVALFGLIFGWVLFPTILKSQLKKEMALSKKTDVRKMWEKIPFALDFKVYIFNFTNAEEVQKGATPILKEIGPYHFDEWKEKVEVEDHEEDDTITYKKRDVFYFNPEMSGPGLTGEEIVVIPHIFMLGMALTVARDKPAMLNMVGKAMNGIFDDPPDIFLRVKALDILFRGMIINCARTEFAPKATCTALKKEAVSGLVLEPNNQFRFSIFGTRNNTIDPHVITVKRGIKNVMDVGQVVAVDGKLEQTIWRDTCNEYQGTDGTVFPPFVPETERIQSFSTDLCRTFKPWYQKKTSYRGIKTNRYVANIGDFANDPELNCFCPKPDSCPPKGLMDLAPCMKAPMYASMPHFLDSDPELLTKVKGLNPDVTQHGIEIDYEPITGTPMVAKQRIQFNIQLLKTDKLDLFKDLSGDIVPLFWIDEGLALNKTFVNMLKHQLFIPKRVVGVLRWWVVSFGSLGAVIGIVFHFRDHIMRLAVSGDTKVSKVTPEEPEQKDISVIGQAQEPAKVNI</sequence>
<organism>
    <name type="scientific">Heliothis virescens</name>
    <name type="common">Tobacco budworm moth</name>
    <dbReference type="NCBI Taxonomy" id="7102"/>
    <lineage>
        <taxon>Eukaryota</taxon>
        <taxon>Metazoa</taxon>
        <taxon>Ecdysozoa</taxon>
        <taxon>Arthropoda</taxon>
        <taxon>Hexapoda</taxon>
        <taxon>Insecta</taxon>
        <taxon>Pterygota</taxon>
        <taxon>Neoptera</taxon>
        <taxon>Endopterygota</taxon>
        <taxon>Lepidoptera</taxon>
        <taxon>Glossata</taxon>
        <taxon>Ditrysia</taxon>
        <taxon>Noctuoidea</taxon>
        <taxon>Noctuidae</taxon>
        <taxon>Heliothinae</taxon>
        <taxon>Heliothis</taxon>
    </lineage>
</organism>
<keyword id="KW-1003">Cell membrane</keyword>
<keyword id="KW-1015">Disulfide bond</keyword>
<keyword id="KW-0325">Glycoprotein</keyword>
<keyword id="KW-0472">Membrane</keyword>
<keyword id="KW-0552">Olfaction</keyword>
<keyword id="KW-0588">Pheromone</keyword>
<keyword id="KW-0675">Receptor</keyword>
<keyword id="KW-0716">Sensory transduction</keyword>
<keyword id="KW-0812">Transmembrane</keyword>
<keyword id="KW-1133">Transmembrane helix</keyword>
<reference evidence="7" key="1">
    <citation type="journal article" date="2001" name="J. Neurobiol.">
        <title>Antennal SNMPs (sensory neuron membrane proteins) of Lepidoptera define a unique family of invertebrate CD36-like proteins.</title>
        <authorList>
            <person name="Rogers M.E."/>
            <person name="Krieger J."/>
            <person name="Vogt R.G."/>
        </authorList>
    </citation>
    <scope>NUCLEOTIDE SEQUENCE [MRNA]</scope>
    <source>
        <tissue evidence="7">Antenna</tissue>
    </source>
</reference>
<reference evidence="6" key="2">
    <citation type="journal article" date="2008" name="Chem. Senses">
        <title>Differential expression of SNMP-1 and SNMP-2 proteins in pheromone-sensitive hairs of moths.</title>
        <authorList>
            <person name="Forstner M."/>
            <person name="Gohl T."/>
            <person name="Gondesen I."/>
            <person name="Raming K."/>
            <person name="Breer H."/>
            <person name="Krieger J."/>
        </authorList>
    </citation>
    <scope>TISSUE SPECIFICITY</scope>
    <source>
        <tissue evidence="4">Antenna</tissue>
    </source>
</reference>
<protein>
    <recommendedName>
        <fullName>Sensory neuron membrane protein 1</fullName>
        <shortName evidence="5">SNMP1-Hvir</shortName>
    </recommendedName>
</protein>
<gene>
    <name evidence="7" type="primary">snmp1</name>
</gene>
<evidence type="ECO:0000250" key="1">
    <source>
        <dbReference type="UniProtKB" id="O02351"/>
    </source>
</evidence>
<evidence type="ECO:0000250" key="2">
    <source>
        <dbReference type="UniProtKB" id="P26201"/>
    </source>
</evidence>
<evidence type="ECO:0000255" key="3"/>
<evidence type="ECO:0000269" key="4">
    <source>
    </source>
</evidence>
<evidence type="ECO:0000303" key="5">
    <source>
    </source>
</evidence>
<evidence type="ECO:0000305" key="6"/>
<evidence type="ECO:0000312" key="7">
    <source>
        <dbReference type="EMBL" id="CAB65739.1"/>
    </source>
</evidence>
<dbReference type="EMBL" id="AJ251959">
    <property type="protein sequence ID" value="CAB65739.1"/>
    <property type="molecule type" value="mRNA"/>
</dbReference>
<dbReference type="SMR" id="Q9U1G3"/>
<dbReference type="TCDB" id="9.B.39.1.11">
    <property type="family name" value="the long chain fatty acid translocase (lcfat) family"/>
</dbReference>
<dbReference type="GlyCosmos" id="Q9U1G3">
    <property type="glycosylation" value="3 sites, No reported glycans"/>
</dbReference>
<dbReference type="GO" id="GO:0005737">
    <property type="term" value="C:cytoplasm"/>
    <property type="evidence" value="ECO:0007669"/>
    <property type="project" value="TreeGrafter"/>
</dbReference>
<dbReference type="GO" id="GO:0005886">
    <property type="term" value="C:plasma membrane"/>
    <property type="evidence" value="ECO:0007669"/>
    <property type="project" value="UniProtKB-SubCell"/>
</dbReference>
<dbReference type="GO" id="GO:0005186">
    <property type="term" value="F:pheromone activity"/>
    <property type="evidence" value="ECO:0007669"/>
    <property type="project" value="UniProtKB-KW"/>
</dbReference>
<dbReference type="GO" id="GO:0005044">
    <property type="term" value="F:scavenger receptor activity"/>
    <property type="evidence" value="ECO:0007669"/>
    <property type="project" value="TreeGrafter"/>
</dbReference>
<dbReference type="GO" id="GO:0007608">
    <property type="term" value="P:sensory perception of smell"/>
    <property type="evidence" value="ECO:0007669"/>
    <property type="project" value="UniProtKB-KW"/>
</dbReference>
<dbReference type="InterPro" id="IPR002159">
    <property type="entry name" value="CD36_fam"/>
</dbReference>
<dbReference type="PANTHER" id="PTHR11923">
    <property type="entry name" value="SCAVENGER RECEPTOR CLASS B TYPE-1 SR-B1"/>
    <property type="match status" value="1"/>
</dbReference>
<dbReference type="PANTHER" id="PTHR11923:SF69">
    <property type="entry name" value="SENSORY NEURON MEMBRANE PROTEIN 1"/>
    <property type="match status" value="1"/>
</dbReference>
<dbReference type="Pfam" id="PF01130">
    <property type="entry name" value="CD36"/>
    <property type="match status" value="1"/>
</dbReference>
<dbReference type="PRINTS" id="PR01609">
    <property type="entry name" value="CD36FAMILY"/>
</dbReference>
<comment type="function">
    <text evidence="1">Plays an olfactory role that is not restricted to pheromone sensitivity.</text>
</comment>
<comment type="subcellular location">
    <subcellularLocation>
        <location evidence="1">Cell membrane</location>
        <topology evidence="1">Multi-pass membrane protein</topology>
    </subcellularLocation>
</comment>
<comment type="tissue specificity">
    <text evidence="4">Detected in sensory neurons in the antenna.</text>
</comment>
<comment type="similarity">
    <text evidence="6">Belongs to the CD36 family.</text>
</comment>
<accession>Q9U1G3</accession>